<evidence type="ECO:0000250" key="1">
    <source>
        <dbReference type="UniProtKB" id="P56871"/>
    </source>
</evidence>
<evidence type="ECO:0000255" key="2">
    <source>
        <dbReference type="PROSITE-ProRule" id="PRU00395"/>
    </source>
</evidence>
<evidence type="ECO:0000269" key="3">
    <source>
    </source>
</evidence>
<evidence type="ECO:0000269" key="4">
    <source>
    </source>
</evidence>
<evidence type="ECO:0000305" key="5"/>
<name>CYO19_VIOOD</name>
<keyword id="KW-0903">Direct protein sequencing</keyword>
<keyword id="KW-1015">Disulfide bond</keyword>
<keyword id="KW-0960">Knottin</keyword>
<keyword id="KW-0611">Plant defense</keyword>
<sequence length="31" mass="3253">GTLPCGESCVWIPCISSVVGCSCKSKVCYKD</sequence>
<feature type="peptide" id="PRO_0000294948" description="Cycloviolacin-O19" evidence="2 3">
    <location>
        <begin position="1"/>
        <end position="31"/>
    </location>
</feature>
<feature type="disulfide bond" evidence="1 2">
    <location>
        <begin position="5"/>
        <end position="21"/>
    </location>
</feature>
<feature type="disulfide bond" evidence="1 2">
    <location>
        <begin position="9"/>
        <end position="23"/>
    </location>
</feature>
<feature type="disulfide bond" evidence="1 2">
    <location>
        <begin position="14"/>
        <end position="28"/>
    </location>
</feature>
<feature type="cross-link" description="Cyclopeptide (Gly-Asp)" evidence="3">
    <location>
        <begin position="1"/>
        <end position="31"/>
    </location>
</feature>
<accession>P85182</accession>
<protein>
    <recommendedName>
        <fullName>Cycloviolacin-O19</fullName>
    </recommendedName>
</protein>
<reference evidence="5" key="1">
    <citation type="journal article" date="2006" name="Biochem. J.">
        <title>A novel suite of cyclotides from Viola odorata: sequence variation and the implications for structure, function and stability.</title>
        <authorList>
            <person name="Ireland D.C."/>
            <person name="Colgrave M.L."/>
            <person name="Craik D.J."/>
        </authorList>
    </citation>
    <scope>PROTEIN SEQUENCE</scope>
    <scope>MASS SPECTROMETRY</scope>
</reference>
<reference key="2">
    <citation type="journal article" date="2017" name="J. Nat. Prod.">
        <title>Cyclotides from the Indian Medicinal Plant Viola odorata (Banafsha): Identification and Characterization.</title>
        <authorList>
            <person name="Narayani M."/>
            <person name="Chadha A."/>
            <person name="Srivastava S."/>
        </authorList>
    </citation>
    <scope>TISSUE SPECIFICITY</scope>
    <scope>IDENTIFICATION BY MASS SPECTROMETRY</scope>
</reference>
<comment type="function">
    <text evidence="5">Probably participates in a plant defense mechanism.</text>
</comment>
<comment type="tissue specificity">
    <text evidence="4">Expressed in petioles and runners but not in leaves, petals and roots (at protein level).</text>
</comment>
<comment type="domain">
    <text evidence="1">The presence of a 'disulfide through disulfide knot' structurally defines this protein as a knottin.</text>
</comment>
<comment type="PTM">
    <text evidence="2 3">This is a cyclic peptide.</text>
</comment>
<comment type="mass spectrometry" mass="3226.5" method="MALDI" evidence="3"/>
<comment type="similarity">
    <text evidence="2">Belongs to the cyclotide family. Bracelet subfamily.</text>
</comment>
<comment type="caution">
    <text evidence="3">This peptide is cyclic. The start position was chosen by similarity to OAK1 (kalata-B1) for which the DNA sequence is known.</text>
</comment>
<organism>
    <name type="scientific">Viola odorata</name>
    <name type="common">Sweet violet</name>
    <dbReference type="NCBI Taxonomy" id="97441"/>
    <lineage>
        <taxon>Eukaryota</taxon>
        <taxon>Viridiplantae</taxon>
        <taxon>Streptophyta</taxon>
        <taxon>Embryophyta</taxon>
        <taxon>Tracheophyta</taxon>
        <taxon>Spermatophyta</taxon>
        <taxon>Magnoliopsida</taxon>
        <taxon>eudicotyledons</taxon>
        <taxon>Gunneridae</taxon>
        <taxon>Pentapetalae</taxon>
        <taxon>rosids</taxon>
        <taxon>fabids</taxon>
        <taxon>Malpighiales</taxon>
        <taxon>Violaceae</taxon>
        <taxon>Viola</taxon>
        <taxon>Viola subgen. Viola</taxon>
        <taxon>Viola sect. Viola</taxon>
        <taxon>Viola subsect. Viola</taxon>
    </lineage>
</organism>
<proteinExistence type="evidence at protein level"/>
<dbReference type="SMR" id="P85182"/>
<dbReference type="GO" id="GO:0006952">
    <property type="term" value="P:defense response"/>
    <property type="evidence" value="ECO:0007669"/>
    <property type="project" value="UniProtKB-KW"/>
</dbReference>
<dbReference type="InterPro" id="IPR005535">
    <property type="entry name" value="Cyclotide"/>
</dbReference>
<dbReference type="InterPro" id="IPR012323">
    <property type="entry name" value="Cyclotide_bracelet_CS"/>
</dbReference>
<dbReference type="InterPro" id="IPR036146">
    <property type="entry name" value="Cyclotide_sf"/>
</dbReference>
<dbReference type="Pfam" id="PF03784">
    <property type="entry name" value="Cyclotide"/>
    <property type="match status" value="1"/>
</dbReference>
<dbReference type="PIRSF" id="PIRSF037891">
    <property type="entry name" value="Cycloviolacin"/>
    <property type="match status" value="1"/>
</dbReference>
<dbReference type="SUPFAM" id="SSF57038">
    <property type="entry name" value="Cyclotides"/>
    <property type="match status" value="1"/>
</dbReference>
<dbReference type="PROSITE" id="PS51052">
    <property type="entry name" value="CYCLOTIDE"/>
    <property type="match status" value="1"/>
</dbReference>
<dbReference type="PROSITE" id="PS60008">
    <property type="entry name" value="CYCLOTIDE_BRACELET"/>
    <property type="match status" value="1"/>
</dbReference>